<reference key="1">
    <citation type="journal article" date="2004" name="Genome Res.">
        <title>The status, quality, and expansion of the NIH full-length cDNA project: the Mammalian Gene Collection (MGC).</title>
        <authorList>
            <consortium name="The MGC Project Team"/>
        </authorList>
    </citation>
    <scope>NUCLEOTIDE SEQUENCE [LARGE SCALE MRNA]</scope>
    <source>
        <tissue>Testis</tissue>
    </source>
</reference>
<gene>
    <name evidence="3" type="primary">Tent5c</name>
    <name evidence="3" type="synonym">Fam46c</name>
</gene>
<protein>
    <recommendedName>
        <fullName evidence="2">Terminal nucleotidyltransferase 5C</fullName>
        <ecNumber evidence="1">2.7.7.19</ecNumber>
    </recommendedName>
</protein>
<name>TET5C_RAT</name>
<accession>Q5XIV0</accession>
<comment type="function">
    <text evidence="1">Catalyzes the transfer of one adenosine molecule from an ATP to an mRNA poly(A) tail bearing a 3'-OH terminal group and enhances mRNA stability and gene expression. Can also elongate RNA oligos ending with uridine molecule, provided that the sequence is adenosine-rich. Mainly targets mRNAs encoding endoplasmic reticulum-targeted protein.</text>
</comment>
<comment type="catalytic activity">
    <reaction evidence="1">
        <text>RNA(n) + ATP = RNA(n)-3'-adenine ribonucleotide + diphosphate</text>
        <dbReference type="Rhea" id="RHEA:11332"/>
        <dbReference type="Rhea" id="RHEA-COMP:14527"/>
        <dbReference type="Rhea" id="RHEA-COMP:17347"/>
        <dbReference type="ChEBI" id="CHEBI:30616"/>
        <dbReference type="ChEBI" id="CHEBI:33019"/>
        <dbReference type="ChEBI" id="CHEBI:140395"/>
        <dbReference type="ChEBI" id="CHEBI:173115"/>
        <dbReference type="EC" id="2.7.7.19"/>
    </reaction>
    <physiologicalReaction direction="left-to-right" evidence="1">
        <dbReference type="Rhea" id="RHEA:11333"/>
    </physiologicalReaction>
</comment>
<comment type="subunit">
    <text evidence="1">Interacts with BCCIP and PABPC1; the interaction has no effect on TENT5C poly(A) polymerase function. Interacts with PLK4; this interaction leads to the TENT5C recruitment into the centrosome.</text>
</comment>
<comment type="subcellular location">
    <subcellularLocation>
        <location evidence="1">Nucleus</location>
    </subcellularLocation>
    <subcellularLocation>
        <location evidence="1">Cytoplasm</location>
    </subcellularLocation>
    <subcellularLocation>
        <location evidence="1">Cytoplasm</location>
        <location evidence="1">Cytoskeleton</location>
        <location evidence="1">Microtubule organizing center</location>
        <location evidence="1">Centrosome</location>
    </subcellularLocation>
    <text evidence="1">Recruited into the centrosome through its interaction with PLK4.</text>
</comment>
<comment type="similarity">
    <text evidence="2">Belongs to the TENT family.</text>
</comment>
<feature type="chain" id="PRO_0000259936" description="Terminal nucleotidyltransferase 5C">
    <location>
        <begin position="1"/>
        <end position="391"/>
    </location>
</feature>
<proteinExistence type="evidence at transcript level"/>
<organism>
    <name type="scientific">Rattus norvegicus</name>
    <name type="common">Rat</name>
    <dbReference type="NCBI Taxonomy" id="10116"/>
    <lineage>
        <taxon>Eukaryota</taxon>
        <taxon>Metazoa</taxon>
        <taxon>Chordata</taxon>
        <taxon>Craniata</taxon>
        <taxon>Vertebrata</taxon>
        <taxon>Euteleostomi</taxon>
        <taxon>Mammalia</taxon>
        <taxon>Eutheria</taxon>
        <taxon>Euarchontoglires</taxon>
        <taxon>Glires</taxon>
        <taxon>Rodentia</taxon>
        <taxon>Myomorpha</taxon>
        <taxon>Muroidea</taxon>
        <taxon>Muridae</taxon>
        <taxon>Murinae</taxon>
        <taxon>Rattus</taxon>
    </lineage>
</organism>
<evidence type="ECO:0000250" key="1">
    <source>
        <dbReference type="UniProtKB" id="Q5VWP2"/>
    </source>
</evidence>
<evidence type="ECO:0000305" key="2"/>
<evidence type="ECO:0000312" key="3">
    <source>
        <dbReference type="RGD" id="1359446"/>
    </source>
</evidence>
<dbReference type="EC" id="2.7.7.19" evidence="1"/>
<dbReference type="EMBL" id="BC083570">
    <property type="protein sequence ID" value="AAH83570.1"/>
    <property type="molecule type" value="mRNA"/>
</dbReference>
<dbReference type="RefSeq" id="NP_001014063.1">
    <property type="nucleotide sequence ID" value="NM_001014041.1"/>
</dbReference>
<dbReference type="RefSeq" id="XP_006233100.1">
    <property type="nucleotide sequence ID" value="XM_006233038.5"/>
</dbReference>
<dbReference type="SMR" id="Q5XIV0"/>
<dbReference type="FunCoup" id="Q5XIV0">
    <property type="interactions" value="355"/>
</dbReference>
<dbReference type="IntAct" id="Q5XIV0">
    <property type="interactions" value="1"/>
</dbReference>
<dbReference type="STRING" id="10116.ENSRNOP00000020401"/>
<dbReference type="PhosphoSitePlus" id="Q5XIV0"/>
<dbReference type="PaxDb" id="10116-ENSRNOP00000020401"/>
<dbReference type="Ensembl" id="ENSRNOT00000097284.1">
    <property type="protein sequence ID" value="ENSRNOP00000077686.1"/>
    <property type="gene ID" value="ENSRNOG00000070242.1"/>
</dbReference>
<dbReference type="Ensembl" id="ENSRNOT00000098405.1">
    <property type="protein sequence ID" value="ENSRNOP00000096421.1"/>
    <property type="gene ID" value="ENSRNOG00000070242.1"/>
</dbReference>
<dbReference type="Ensembl" id="ENSRNOT00000103060.1">
    <property type="protein sequence ID" value="ENSRNOP00000080921.1"/>
    <property type="gene ID" value="ENSRNOG00000070242.1"/>
</dbReference>
<dbReference type="Ensembl" id="ENSRNOT00000108426.1">
    <property type="protein sequence ID" value="ENSRNOP00000081945.1"/>
    <property type="gene ID" value="ENSRNOG00000070242.1"/>
</dbReference>
<dbReference type="Ensembl" id="ENSRNOT00000116221.1">
    <property type="protein sequence ID" value="ENSRNOP00000093669.1"/>
    <property type="gene ID" value="ENSRNOG00000070242.1"/>
</dbReference>
<dbReference type="GeneID" id="310721"/>
<dbReference type="KEGG" id="rno:310721"/>
<dbReference type="UCSC" id="RGD:1359446">
    <property type="organism name" value="rat"/>
</dbReference>
<dbReference type="AGR" id="RGD:1359446"/>
<dbReference type="CTD" id="54855"/>
<dbReference type="RGD" id="1359446">
    <property type="gene designation" value="Tent5c"/>
</dbReference>
<dbReference type="eggNOG" id="KOG3852">
    <property type="taxonomic scope" value="Eukaryota"/>
</dbReference>
<dbReference type="GeneTree" id="ENSGT00940000158856"/>
<dbReference type="HOGENOM" id="CLU_008115_2_0_1"/>
<dbReference type="InParanoid" id="Q5XIV0"/>
<dbReference type="OMA" id="TWDQVSR"/>
<dbReference type="PhylomeDB" id="Q5XIV0"/>
<dbReference type="TreeFam" id="TF315239"/>
<dbReference type="PRO" id="PR:Q5XIV0"/>
<dbReference type="Proteomes" id="UP000002494">
    <property type="component" value="Chromosome 2"/>
</dbReference>
<dbReference type="Bgee" id="ENSRNOG00000015222">
    <property type="expression patterns" value="Expressed in testis and 18 other cell types or tissues"/>
</dbReference>
<dbReference type="GO" id="GO:0005813">
    <property type="term" value="C:centrosome"/>
    <property type="evidence" value="ECO:0000250"/>
    <property type="project" value="UniProtKB"/>
</dbReference>
<dbReference type="GO" id="GO:0005737">
    <property type="term" value="C:cytoplasm"/>
    <property type="evidence" value="ECO:0000250"/>
    <property type="project" value="UniProtKB"/>
</dbReference>
<dbReference type="GO" id="GO:0005654">
    <property type="term" value="C:nucleoplasm"/>
    <property type="evidence" value="ECO:0007669"/>
    <property type="project" value="Ensembl"/>
</dbReference>
<dbReference type="GO" id="GO:0005634">
    <property type="term" value="C:nucleus"/>
    <property type="evidence" value="ECO:0000250"/>
    <property type="project" value="UniProtKB"/>
</dbReference>
<dbReference type="GO" id="GO:1990817">
    <property type="term" value="F:poly(A) RNA polymerase activity"/>
    <property type="evidence" value="ECO:0000250"/>
    <property type="project" value="UniProtKB"/>
</dbReference>
<dbReference type="GO" id="GO:0003723">
    <property type="term" value="F:RNA binding"/>
    <property type="evidence" value="ECO:0007669"/>
    <property type="project" value="UniProtKB-KW"/>
</dbReference>
<dbReference type="GO" id="GO:0001701">
    <property type="term" value="P:in utero embryonic development"/>
    <property type="evidence" value="ECO:0000266"/>
    <property type="project" value="RGD"/>
</dbReference>
<dbReference type="GO" id="GO:0048255">
    <property type="term" value="P:mRNA stabilization"/>
    <property type="evidence" value="ECO:0000250"/>
    <property type="project" value="UniProtKB"/>
</dbReference>
<dbReference type="GO" id="GO:0045596">
    <property type="term" value="P:negative regulation of cell differentiation"/>
    <property type="evidence" value="ECO:0000250"/>
    <property type="project" value="UniProtKB"/>
</dbReference>
<dbReference type="InterPro" id="IPR012937">
    <property type="entry name" value="TET5"/>
</dbReference>
<dbReference type="PANTHER" id="PTHR12974">
    <property type="entry name" value="PRION-LIKE- Q/N-RICH -DOMAIN-BEARING PROTEIN PROTEIN 44"/>
    <property type="match status" value="1"/>
</dbReference>
<dbReference type="PANTHER" id="PTHR12974:SF34">
    <property type="entry name" value="TERMINAL NUCLEOTIDYLTRANSFERASE 5C"/>
    <property type="match status" value="1"/>
</dbReference>
<dbReference type="Pfam" id="PF07984">
    <property type="entry name" value="NTP_transf_7"/>
    <property type="match status" value="1"/>
</dbReference>
<dbReference type="SMART" id="SM01153">
    <property type="entry name" value="DUF1693"/>
    <property type="match status" value="1"/>
</dbReference>
<keyword id="KW-0963">Cytoplasm</keyword>
<keyword id="KW-0206">Cytoskeleton</keyword>
<keyword id="KW-0548">Nucleotidyltransferase</keyword>
<keyword id="KW-0539">Nucleus</keyword>
<keyword id="KW-1185">Reference proteome</keyword>
<keyword id="KW-0694">RNA-binding</keyword>
<keyword id="KW-0808">Transferase</keyword>
<sequence length="391" mass="44799">MADEGSSTKDSESFSVLNWDQVSRLHEVLTEVVPIHGRGNFPTLEITLKDIVQTVRSRLEEAGIKVQDVRLNGSAAGHVLVKDNGLGCKDLDLIFHVALPTEAEFQLVRDVVLCSLLNFLPEGVNKLKISPVTLKEAYVQKLVKVCTDTDRWSLISLSNKNGRNVELKFVDSIRRQFEFSVDSFQIILDSLLFFYDCSSNPVSEHFHPTVVGESMYGDFEEAFDHLQNRLIATKNPEEIRGGGLLKYSNLLVRDFRPADQEEIKTLERYMCSRFFIDFPDILEQQRKLETYLQNHFADEERSKYDYLMILRRVVNESTVCLMGHERRQTLNLISLLALRVLAEQNIIPSATNVTCYYQPAPYVSDGNFNNYYIAHPPVTYSQPYPTWLPCN</sequence>